<proteinExistence type="inferred from homology"/>
<comment type="similarity">
    <text evidence="1">Belongs to the universal ribosomal protein uL29 family.</text>
</comment>
<feature type="chain" id="PRO_1000007512" description="Large ribosomal subunit protein uL29">
    <location>
        <begin position="1"/>
        <end position="94"/>
    </location>
</feature>
<feature type="region of interest" description="Disordered" evidence="2">
    <location>
        <begin position="66"/>
        <end position="94"/>
    </location>
</feature>
<feature type="compositionally biased region" description="Basic residues" evidence="2">
    <location>
        <begin position="73"/>
        <end position="94"/>
    </location>
</feature>
<reference key="1">
    <citation type="journal article" date="2006" name="Proc. Natl. Acad. Sci. U.S.A.">
        <title>Genome reduction in Leptospira borgpetersenii reflects limited transmission potential.</title>
        <authorList>
            <person name="Bulach D.M."/>
            <person name="Zuerner R.L."/>
            <person name="Wilson P."/>
            <person name="Seemann T."/>
            <person name="McGrath A."/>
            <person name="Cullen P.A."/>
            <person name="Davis J."/>
            <person name="Johnson M."/>
            <person name="Kuczek E."/>
            <person name="Alt D.P."/>
            <person name="Peterson-Burch B."/>
            <person name="Coppel R.L."/>
            <person name="Rood J.I."/>
            <person name="Davies J.K."/>
            <person name="Adler B."/>
        </authorList>
    </citation>
    <scope>NUCLEOTIDE SEQUENCE [LARGE SCALE GENOMIC DNA]</scope>
    <source>
        <strain>JB197</strain>
    </source>
</reference>
<name>RL29_LEPBJ</name>
<protein>
    <recommendedName>
        <fullName evidence="1">Large ribosomal subunit protein uL29</fullName>
    </recommendedName>
    <alternativeName>
        <fullName evidence="3">50S ribosomal protein L29</fullName>
    </alternativeName>
</protein>
<gene>
    <name evidence="1" type="primary">rpmC</name>
    <name type="ordered locus">LBJ_2651</name>
</gene>
<organism>
    <name type="scientific">Leptospira borgpetersenii serovar Hardjo-bovis (strain JB197)</name>
    <dbReference type="NCBI Taxonomy" id="355277"/>
    <lineage>
        <taxon>Bacteria</taxon>
        <taxon>Pseudomonadati</taxon>
        <taxon>Spirochaetota</taxon>
        <taxon>Spirochaetia</taxon>
        <taxon>Leptospirales</taxon>
        <taxon>Leptospiraceae</taxon>
        <taxon>Leptospira</taxon>
    </lineage>
</organism>
<sequence>MKKIKLQELKDSEILEQLEEARKVLRTSRFQYGVARSLENPKVIHNTKKKIAKLLTIQRERQLKVNPGERKSRVLSRAKRKKKNLARLSAKVKG</sequence>
<dbReference type="EMBL" id="CP000350">
    <property type="protein sequence ID" value="ABJ77074.1"/>
    <property type="molecule type" value="Genomic_DNA"/>
</dbReference>
<dbReference type="RefSeq" id="WP_011669436.1">
    <property type="nucleotide sequence ID" value="NC_008510.1"/>
</dbReference>
<dbReference type="SMR" id="Q04PU6"/>
<dbReference type="KEGG" id="lbj:LBJ_2651"/>
<dbReference type="HOGENOM" id="CLU_2382618_0_0_12"/>
<dbReference type="Proteomes" id="UP000000656">
    <property type="component" value="Chromosome 1"/>
</dbReference>
<dbReference type="GO" id="GO:0022625">
    <property type="term" value="C:cytosolic large ribosomal subunit"/>
    <property type="evidence" value="ECO:0007669"/>
    <property type="project" value="TreeGrafter"/>
</dbReference>
<dbReference type="GO" id="GO:0003735">
    <property type="term" value="F:structural constituent of ribosome"/>
    <property type="evidence" value="ECO:0007669"/>
    <property type="project" value="InterPro"/>
</dbReference>
<dbReference type="GO" id="GO:0006412">
    <property type="term" value="P:translation"/>
    <property type="evidence" value="ECO:0007669"/>
    <property type="project" value="UniProtKB-UniRule"/>
</dbReference>
<dbReference type="Gene3D" id="1.10.287.310">
    <property type="match status" value="1"/>
</dbReference>
<dbReference type="HAMAP" id="MF_00374">
    <property type="entry name" value="Ribosomal_uL29"/>
    <property type="match status" value="1"/>
</dbReference>
<dbReference type="InterPro" id="IPR050063">
    <property type="entry name" value="Ribosomal_protein_uL29"/>
</dbReference>
<dbReference type="InterPro" id="IPR001854">
    <property type="entry name" value="Ribosomal_uL29"/>
</dbReference>
<dbReference type="InterPro" id="IPR036049">
    <property type="entry name" value="Ribosomal_uL29_sf"/>
</dbReference>
<dbReference type="NCBIfam" id="TIGR00012">
    <property type="entry name" value="L29"/>
    <property type="match status" value="1"/>
</dbReference>
<dbReference type="PANTHER" id="PTHR10916">
    <property type="entry name" value="60S RIBOSOMAL PROTEIN L35/50S RIBOSOMAL PROTEIN L29"/>
    <property type="match status" value="1"/>
</dbReference>
<dbReference type="PANTHER" id="PTHR10916:SF0">
    <property type="entry name" value="LARGE RIBOSOMAL SUBUNIT PROTEIN UL29C"/>
    <property type="match status" value="1"/>
</dbReference>
<dbReference type="Pfam" id="PF00831">
    <property type="entry name" value="Ribosomal_L29"/>
    <property type="match status" value="1"/>
</dbReference>
<dbReference type="SUPFAM" id="SSF46561">
    <property type="entry name" value="Ribosomal protein L29 (L29p)"/>
    <property type="match status" value="1"/>
</dbReference>
<keyword id="KW-0687">Ribonucleoprotein</keyword>
<keyword id="KW-0689">Ribosomal protein</keyword>
<accession>Q04PU6</accession>
<evidence type="ECO:0000255" key="1">
    <source>
        <dbReference type="HAMAP-Rule" id="MF_00374"/>
    </source>
</evidence>
<evidence type="ECO:0000256" key="2">
    <source>
        <dbReference type="SAM" id="MobiDB-lite"/>
    </source>
</evidence>
<evidence type="ECO:0000305" key="3"/>